<reference key="1">
    <citation type="journal article" date="1992" name="Biochem. Biophys. Res. Commun.">
        <title>cDNA cloning and sequence determination of the pheromone biosynthesis activating neuropeptide of the silkworm, Bombyx mori.</title>
        <authorList>
            <person name="Kawano T."/>
            <person name="Kataoka H."/>
            <person name="Nagasawa H."/>
            <person name="Isogai A."/>
            <person name="Suzuki A."/>
        </authorList>
    </citation>
    <scope>NUCLEOTIDE SEQUENCE [MRNA]</scope>
    <source>
        <strain>Asagiri</strain>
        <strain>Kinshu X Showa</strain>
        <tissue>Subesophageal ganglion</tissue>
    </source>
</reference>
<reference key="2">
    <citation type="journal article" date="1993" name="Proc. Natl. Acad. Sci. U.S.A.">
        <title>Precursor polyprotein for multiple neuropeptides secreted from the suboesophageal ganglion of the silkworm Bombyx mori: characterization of the cDNA encoding the diapause hormone precursor and identification of additional peptides.</title>
        <authorList>
            <person name="Sato Y."/>
            <person name="Oguchi M."/>
            <person name="Menjo N."/>
            <person name="Imai K."/>
            <person name="Saito H."/>
            <person name="Ikeda M."/>
            <person name="Isobe M."/>
            <person name="Yamashita O."/>
        </authorList>
    </citation>
    <scope>NUCLEOTIDE SEQUENCE [MRNA]</scope>
    <scope>PROTEIN SEQUENCE OF 97-103 AND 161-168</scope>
    <scope>AMIDATION AT LEU-47</scope>
    <scope>FUNCTION</scope>
    <scope>SUBCELLULAR LOCATION</scope>
    <scope>TISSUE SPECIFICITY</scope>
    <scope>SYNTHESIS</scope>
    <source>
        <strain>p50T</strain>
        <tissue>Brain</tissue>
        <tissue>Subesophageal ganglion</tissue>
    </source>
</reference>
<reference key="3">
    <citation type="journal article" date="1995" name="Biochim. Biophys. Acta">
        <title>Molecular characterization of the gene encoding the precursor protein of diapause hormone and pheromone biosynthesis activating neuropeptide (DH-PBAN) of the silkworm, Bombyx mori and its distribution in some insects.</title>
        <authorList>
            <person name="Xu W.H."/>
            <person name="Sato Y."/>
            <person name="Ikeda M."/>
            <person name="Yamashita O."/>
        </authorList>
    </citation>
    <scope>NUCLEOTIDE SEQUENCE [GENOMIC DNA]</scope>
    <scope>VARIANT ASN-109</scope>
</reference>
<reference key="4">
    <citation type="journal article" date="1997" name="Biosci. Biotechnol. Biochem.">
        <title>Molecular cloning of a new type of cDNA for pheromone biosynthesis activating neuropeptide in the silkworm, Bombyx mori.</title>
        <authorList>
            <person name="Kawano T."/>
            <person name="Kataoka H."/>
            <person name="Nagasawa H."/>
            <person name="Isogai A."/>
            <person name="Suzuki A."/>
        </authorList>
    </citation>
    <scope>NUCLEOTIDE SEQUENCE [MRNA]</scope>
    <source>
        <strain>J106</strain>
        <tissue>Subesophageal ganglion</tissue>
    </source>
</reference>
<reference key="5">
    <citation type="journal article" date="1990" name="Agric. Biol. Chem.">
        <title>Amino acid sequence of pheromone biosynthesis activating neuropeptide-II (PBAN-II) of the silkmoth, Bombyx mori.</title>
        <authorList>
            <person name="Kitamura A."/>
            <person name="Nagasawa H."/>
            <person name="Kataoka H."/>
            <person name="Ando T."/>
            <person name="Suzuki A."/>
        </authorList>
    </citation>
    <scope>PROTEIN SEQUENCE OF 125-158</scope>
</reference>
<reference key="6">
    <citation type="journal article" date="1989" name="Biochem. Biophys. Res. Commun.">
        <title>Amino acid sequence of pheromone-biosynthesis-activating neuropeptide (PBAN) of the silkworm, Bombyx mori.</title>
        <authorList>
            <person name="Kitamura A."/>
            <person name="Nagasawa H."/>
            <person name="Kataoka H."/>
            <person name="Inoue T."/>
            <person name="Matsumoto S."/>
            <person name="Ando T."/>
            <person name="Suzuki A."/>
        </authorList>
    </citation>
    <scope>PROTEIN SEQUENCE OF 126-158</scope>
    <scope>AMIDATION AT LEU-158</scope>
    <source>
        <tissue>Head</tissue>
    </source>
</reference>
<reference key="7">
    <citation type="journal article" date="1993" name="Biochem. Biophys. Res. Commun.">
        <title>Active conformation of the pyrokinin/PBAN neuropeptide family for pheromone biosynthesis in the silkworm.</title>
        <authorList>
            <person name="Nachman R.J."/>
            <person name="Kuniyoshi H."/>
            <person name="Roberts V.A."/>
            <person name="Holman G.M."/>
            <person name="Suzuki A."/>
        </authorList>
    </citation>
    <scope>PROTEIN SEQUENCE OF 126-158</scope>
</reference>
<reference key="8">
    <citation type="journal article" date="1985" name="FEBS Lett.">
        <title>N-terminal amino acid sequence of an insect neurohormone, melanization and reddish coloration hormone (MRCH): heterogeneity and sequence homology with human insulin-like growth factor II.</title>
        <authorList>
            <person name="Matsumoto S."/>
            <person name="Isogai A."/>
            <person name="Suzuki A."/>
        </authorList>
    </citation>
    <scope>PROTEIN SEQUENCE OF 126-140</scope>
    <source>
        <tissue>Head</tissue>
    </source>
</reference>
<sequence>MYKTNIVFNVLALALFSIFFASCTDMKDESDRGAHSERGALWFGPRLGKRSMKPSTEDNRQTFLRLLEAADALKFYYDQLPYERQADEPETKVTKKIIFTPKLGRSVAKPQTHESLEFIPRLGRRLSEDMPATPADQEMYQPDPEEMESRTRYFSPRLGRTMSFSPRLGRELSYDYPTKYRVARSVNKTMDN</sequence>
<dbReference type="EMBL" id="S50045">
    <property type="protein sequence ID" value="AAB24327.1"/>
    <property type="molecule type" value="mRNA"/>
</dbReference>
<dbReference type="EMBL" id="D28810">
    <property type="protein sequence ID" value="BAA05971.1"/>
    <property type="molecule type" value="mRNA"/>
</dbReference>
<dbReference type="EMBL" id="D13437">
    <property type="protein sequence ID" value="BAA02699.1"/>
    <property type="molecule type" value="mRNA"/>
</dbReference>
<dbReference type="EMBL" id="D16230">
    <property type="protein sequence ID" value="BAA03755.1"/>
    <property type="molecule type" value="Genomic_DNA"/>
</dbReference>
<dbReference type="EMBL" id="D28764">
    <property type="protein sequence ID" value="BAA05954.1"/>
    <property type="molecule type" value="mRNA"/>
</dbReference>
<dbReference type="PIR" id="A23992">
    <property type="entry name" value="A23992"/>
</dbReference>
<dbReference type="PIR" id="JC1354">
    <property type="entry name" value="JC1354"/>
</dbReference>
<dbReference type="PIR" id="JC5865">
    <property type="entry name" value="JC5865"/>
</dbReference>
<dbReference type="RefSeq" id="NP_001037321.1">
    <property type="nucleotide sequence ID" value="NM_001043856.1"/>
</dbReference>
<dbReference type="RefSeq" id="XP_012547317.1">
    <property type="nucleotide sequence ID" value="XM_012691863.1"/>
</dbReference>
<dbReference type="RefSeq" id="XP_062526814.1">
    <property type="nucleotide sequence ID" value="XM_062670830.1"/>
</dbReference>
<dbReference type="SMR" id="P09971"/>
<dbReference type="STRING" id="7091.P09971"/>
<dbReference type="PaxDb" id="7091-BGIBMGA001651-TA"/>
<dbReference type="GeneID" id="692749"/>
<dbReference type="KEGG" id="bmor:692749"/>
<dbReference type="CTD" id="692749"/>
<dbReference type="eggNOG" id="ENOG502TBQ8">
    <property type="taxonomic scope" value="Eukaryota"/>
</dbReference>
<dbReference type="HOGENOM" id="CLU_1403744_0_0_1"/>
<dbReference type="InParanoid" id="P09971"/>
<dbReference type="OrthoDB" id="640451at7088"/>
<dbReference type="Proteomes" id="UP000005204">
    <property type="component" value="Unassembled WGS sequence"/>
</dbReference>
<dbReference type="GO" id="GO:0005576">
    <property type="term" value="C:extracellular region"/>
    <property type="evidence" value="ECO:0000314"/>
    <property type="project" value="UniProtKB"/>
</dbReference>
<dbReference type="GO" id="GO:0016084">
    <property type="term" value="F:myostimulatory hormone activity"/>
    <property type="evidence" value="ECO:0000315"/>
    <property type="project" value="UniProtKB"/>
</dbReference>
<dbReference type="GO" id="GO:0005184">
    <property type="term" value="F:neuropeptide hormone activity"/>
    <property type="evidence" value="ECO:0000315"/>
    <property type="project" value="UniProtKB"/>
</dbReference>
<dbReference type="GO" id="GO:0007218">
    <property type="term" value="P:neuropeptide signaling pathway"/>
    <property type="evidence" value="ECO:0000315"/>
    <property type="project" value="UniProtKB"/>
</dbReference>
<dbReference type="GO" id="GO:0042811">
    <property type="term" value="P:pheromone biosynthetic process"/>
    <property type="evidence" value="ECO:0007669"/>
    <property type="project" value="InterPro"/>
</dbReference>
<dbReference type="InterPro" id="IPR008730">
    <property type="entry name" value="PBAN"/>
</dbReference>
<dbReference type="InterPro" id="IPR001484">
    <property type="entry name" value="Pyrokinin_CS"/>
</dbReference>
<dbReference type="Pfam" id="PF05874">
    <property type="entry name" value="PBAN"/>
    <property type="match status" value="1"/>
</dbReference>
<dbReference type="PROSITE" id="PS00539">
    <property type="entry name" value="PYROKININ"/>
    <property type="match status" value="3"/>
</dbReference>
<keyword id="KW-0027">Amidation</keyword>
<keyword id="KW-0165">Cleavage on pair of basic residues</keyword>
<keyword id="KW-0903">Direct protein sequencing</keyword>
<keyword id="KW-0372">Hormone</keyword>
<keyword id="KW-0527">Neuropeptide</keyword>
<keyword id="KW-1185">Reference proteome</keyword>
<keyword id="KW-0964">Secreted</keyword>
<keyword id="KW-0732">Signal</keyword>
<protein>
    <recommendedName>
        <fullName>PBAN-type neuropeptides</fullName>
    </recommendedName>
    <alternativeName>
        <fullName>Neo-PBAN</fullName>
    </alternativeName>
    <alternativeName>
        <fullName>Pheromone/pyrokinin biosynthesis-activating neuropeptide</fullName>
    </alternativeName>
    <component>
        <recommendedName>
            <fullName>Diapause hormone</fullName>
            <shortName>DH</shortName>
        </recommendedName>
        <alternativeName>
            <fullName>DH-PBAN</fullName>
        </alternativeName>
    </component>
    <component>
        <recommendedName>
            <fullName>Alpha-SG neuropeptide</fullName>
            <shortName>Alpha-SGNP</shortName>
        </recommendedName>
    </component>
    <component>
        <recommendedName>
            <fullName>Beta-SG neuropeptide</fullName>
            <shortName>Beta-SGNP</shortName>
        </recommendedName>
    </component>
    <component>
        <recommendedName>
            <fullName>Pheromone biosynthesis-activating neuropeptide I</fullName>
            <shortName>Bom-PBAN-I</shortName>
            <shortName>PBAN-I</shortName>
        </recommendedName>
        <alternativeName>
            <fullName>Melanization and reddish coloration hormone I</fullName>
            <shortName>MRCH-I</shortName>
        </alternativeName>
    </component>
    <component>
        <recommendedName>
            <fullName>Pheromone biosynthesis-activating neuropeptide II</fullName>
            <shortName>PBAN-II</shortName>
        </recommendedName>
    </component>
    <component>
        <recommendedName>
            <fullName>Gamma-SG neuropeptide</fullName>
            <shortName>Gamma-SGNP</shortName>
        </recommendedName>
    </component>
</protein>
<accession>P09971</accession>
<accession>Q17211</accession>
<accession>Q17234</accession>
<feature type="signal peptide" evidence="2">
    <location>
        <begin position="1"/>
        <end position="23"/>
    </location>
</feature>
<feature type="peptide" id="PRO_0000029921" description="Diapause hormone">
    <location>
        <begin position="24"/>
        <end position="47"/>
    </location>
</feature>
<feature type="propeptide" id="PRO_0000029922">
    <location>
        <begin position="51"/>
        <end position="94"/>
    </location>
</feature>
<feature type="peptide" id="PRO_0000029923" description="Alpha-SG neuropeptide">
    <location>
        <begin position="97"/>
        <end position="103"/>
    </location>
</feature>
<feature type="peptide" id="PRO_0000029924" description="Beta-SG neuropeptide">
    <location>
        <begin position="106"/>
        <end position="122"/>
    </location>
</feature>
<feature type="peptide" id="PRO_0000029925" description="Pheromone biosynthesis-activating neuropeptide II">
    <location>
        <begin position="125"/>
        <end position="158"/>
    </location>
</feature>
<feature type="peptide" id="PRO_0000029926" description="Pheromone biosynthesis-activating neuropeptide I">
    <location>
        <begin position="126"/>
        <end position="158"/>
    </location>
</feature>
<feature type="peptide" id="PRO_0000029927" description="Gamma-SG neuropeptide">
    <location>
        <begin position="161"/>
        <end position="168"/>
    </location>
</feature>
<feature type="propeptide" id="PRO_0000029928">
    <location>
        <begin position="171"/>
        <end position="192"/>
    </location>
</feature>
<feature type="modified residue" description="Leucine amide" evidence="5">
    <location>
        <position position="47"/>
    </location>
</feature>
<feature type="modified residue" description="Leucine amide" evidence="1">
    <location>
        <position position="103"/>
    </location>
</feature>
<feature type="modified residue" description="Leucine amide" evidence="1">
    <location>
        <position position="122"/>
    </location>
</feature>
<feature type="modified residue" description="Leucine amide" evidence="3">
    <location>
        <position position="158"/>
    </location>
</feature>
<feature type="modified residue" description="Leucine amide" evidence="1">
    <location>
        <position position="168"/>
    </location>
</feature>
<feature type="sequence variant" description="In strain: J106." evidence="4">
    <original>K</original>
    <variation>N</variation>
    <location>
        <position position="109"/>
    </location>
</feature>
<feature type="sequence variant" description="In MRCH-III.">
    <original>L</original>
    <variation>PL</variation>
    <location>
        <position position="126"/>
    </location>
</feature>
<feature type="sequence variant" description="In strain: Daizo and J106.">
    <original>M</original>
    <variation>I</variation>
    <location>
        <position position="139"/>
    </location>
</feature>
<feature type="sequence variant" description="In strain: J106.">
    <original>E</original>
    <variation>V</variation>
    <location>
        <position position="146"/>
    </location>
</feature>
<feature type="sequence conflict" description="In Ref. 3; BAA03755." evidence="6" ref="3">
    <original>Q</original>
    <variation>R</variation>
    <location>
        <position position="111"/>
    </location>
</feature>
<organism>
    <name type="scientific">Bombyx mori</name>
    <name type="common">Silk moth</name>
    <dbReference type="NCBI Taxonomy" id="7091"/>
    <lineage>
        <taxon>Eukaryota</taxon>
        <taxon>Metazoa</taxon>
        <taxon>Ecdysozoa</taxon>
        <taxon>Arthropoda</taxon>
        <taxon>Hexapoda</taxon>
        <taxon>Insecta</taxon>
        <taxon>Pterygota</taxon>
        <taxon>Neoptera</taxon>
        <taxon>Endopterygota</taxon>
        <taxon>Lepidoptera</taxon>
        <taxon>Glossata</taxon>
        <taxon>Ditrysia</taxon>
        <taxon>Bombycoidea</taxon>
        <taxon>Bombycidae</taxon>
        <taxon>Bombycinae</taxon>
        <taxon>Bombyx</taxon>
    </lineage>
</organism>
<evidence type="ECO:0000250" key="1"/>
<evidence type="ECO:0000255" key="2"/>
<evidence type="ECO:0000269" key="3">
    <source>
    </source>
</evidence>
<evidence type="ECO:0000269" key="4">
    <source>
    </source>
</evidence>
<evidence type="ECO:0000269" key="5">
    <source>
    </source>
</evidence>
<evidence type="ECO:0000305" key="6"/>
<proteinExistence type="evidence at protein level"/>
<comment type="function">
    <text evidence="5">A hormone that controls sex pheromone production in females and pheromone responsiveness in male. Also mediates visceral muscle contractile activity (myotropic activity). Identical to MRCH which is implicated in the formation of both melanin in the cuticle and ommochrome in the epidermis of armyworm species.</text>
</comment>
<comment type="function">
    <text evidence="5">Diapause hormone (DH) is responsible for induction of embryonic diapause.</text>
</comment>
<comment type="function">
    <text evidence="5">The three SGNPS are far less active than DH in inducing diapause eggs. Beta-SGNP expressed higher pban activity than PBAN-I, but alpha- and gamma-SGNP were far less active in pheromonotropic activity.</text>
</comment>
<comment type="subcellular location">
    <subcellularLocation>
        <location evidence="5">Secreted</location>
    </subcellularLocation>
</comment>
<comment type="tissue specificity">
    <text evidence="5">Expression is restricted to the subesophageal ganglion.</text>
</comment>
<comment type="similarity">
    <text evidence="6">Belongs to the pyrokinin family.</text>
</comment>
<name>PBAN_BOMMO</name>